<feature type="chain" id="PRO_1000017826" description="Methylglyoxal synthase">
    <location>
        <begin position="1"/>
        <end position="154"/>
    </location>
</feature>
<feature type="domain" description="MGS-like" evidence="1">
    <location>
        <begin position="6"/>
        <end position="154"/>
    </location>
</feature>
<feature type="active site" description="Proton donor/acceptor" evidence="1">
    <location>
        <position position="71"/>
    </location>
</feature>
<feature type="binding site" evidence="1">
    <location>
        <position position="19"/>
    </location>
    <ligand>
        <name>substrate</name>
    </ligand>
</feature>
<feature type="binding site" evidence="1">
    <location>
        <position position="23"/>
    </location>
    <ligand>
        <name>substrate</name>
    </ligand>
</feature>
<feature type="binding site" evidence="1">
    <location>
        <begin position="45"/>
        <end position="48"/>
    </location>
    <ligand>
        <name>substrate</name>
    </ligand>
</feature>
<feature type="binding site" evidence="1">
    <location>
        <begin position="65"/>
        <end position="66"/>
    </location>
    <ligand>
        <name>substrate</name>
    </ligand>
</feature>
<feature type="binding site" evidence="1">
    <location>
        <position position="98"/>
    </location>
    <ligand>
        <name>substrate</name>
    </ligand>
</feature>
<sequence>MKSRTGALPSRKQIALIAHDNKKQELSDWVCTHKKELEQHDLFATGTTGYKLAAETGLKVEKYISGPLGGDQQIGAKISTGEIDVLIFFWDPFEPMPHDPDVKALLRIAAVWNIPVACNPASADFVITSPLIKQSYERQIPDYEAYIAERTKKL</sequence>
<reference key="1">
    <citation type="journal article" date="2008" name="PLoS Genet.">
        <title>Complete genome sequence of the complex carbohydrate-degrading marine bacterium, Saccharophagus degradans strain 2-40 T.</title>
        <authorList>
            <person name="Weiner R.M."/>
            <person name="Taylor L.E. II"/>
            <person name="Henrissat B."/>
            <person name="Hauser L."/>
            <person name="Land M."/>
            <person name="Coutinho P.M."/>
            <person name="Rancurel C."/>
            <person name="Saunders E.H."/>
            <person name="Longmire A.G."/>
            <person name="Zhang H."/>
            <person name="Bayer E.A."/>
            <person name="Gilbert H.J."/>
            <person name="Larimer F."/>
            <person name="Zhulin I.B."/>
            <person name="Ekborg N.A."/>
            <person name="Lamed R."/>
            <person name="Richardson P.M."/>
            <person name="Borovok I."/>
            <person name="Hutcheson S."/>
        </authorList>
    </citation>
    <scope>NUCLEOTIDE SEQUENCE [LARGE SCALE GENOMIC DNA]</scope>
    <source>
        <strain>2-40 / ATCC 43961 / DSM 17024</strain>
    </source>
</reference>
<name>MGSA_SACD2</name>
<accession>Q21L65</accession>
<keyword id="KW-0456">Lyase</keyword>
<keyword id="KW-1185">Reference proteome</keyword>
<comment type="function">
    <text evidence="1">Catalyzes the formation of methylglyoxal from dihydroxyacetone phosphate.</text>
</comment>
<comment type="catalytic activity">
    <reaction evidence="1">
        <text>dihydroxyacetone phosphate = methylglyoxal + phosphate</text>
        <dbReference type="Rhea" id="RHEA:17937"/>
        <dbReference type="ChEBI" id="CHEBI:17158"/>
        <dbReference type="ChEBI" id="CHEBI:43474"/>
        <dbReference type="ChEBI" id="CHEBI:57642"/>
        <dbReference type="EC" id="4.2.3.3"/>
    </reaction>
</comment>
<comment type="similarity">
    <text evidence="1">Belongs to the methylglyoxal synthase family.</text>
</comment>
<organism>
    <name type="scientific">Saccharophagus degradans (strain 2-40 / ATCC 43961 / DSM 17024)</name>
    <dbReference type="NCBI Taxonomy" id="203122"/>
    <lineage>
        <taxon>Bacteria</taxon>
        <taxon>Pseudomonadati</taxon>
        <taxon>Pseudomonadota</taxon>
        <taxon>Gammaproteobacteria</taxon>
        <taxon>Cellvibrionales</taxon>
        <taxon>Cellvibrionaceae</taxon>
        <taxon>Saccharophagus</taxon>
    </lineage>
</organism>
<proteinExistence type="inferred from homology"/>
<dbReference type="EC" id="4.2.3.3" evidence="1"/>
<dbReference type="EMBL" id="CP000282">
    <property type="protein sequence ID" value="ABD80564.1"/>
    <property type="molecule type" value="Genomic_DNA"/>
</dbReference>
<dbReference type="RefSeq" id="WP_011467784.1">
    <property type="nucleotide sequence ID" value="NC_007912.1"/>
</dbReference>
<dbReference type="SMR" id="Q21L65"/>
<dbReference type="STRING" id="203122.Sde_1302"/>
<dbReference type="GeneID" id="98612978"/>
<dbReference type="KEGG" id="sde:Sde_1302"/>
<dbReference type="eggNOG" id="COG1803">
    <property type="taxonomic scope" value="Bacteria"/>
</dbReference>
<dbReference type="HOGENOM" id="CLU_120420_0_1_6"/>
<dbReference type="OrthoDB" id="9787147at2"/>
<dbReference type="Proteomes" id="UP000001947">
    <property type="component" value="Chromosome"/>
</dbReference>
<dbReference type="GO" id="GO:0005829">
    <property type="term" value="C:cytosol"/>
    <property type="evidence" value="ECO:0007669"/>
    <property type="project" value="TreeGrafter"/>
</dbReference>
<dbReference type="GO" id="GO:0008929">
    <property type="term" value="F:methylglyoxal synthase activity"/>
    <property type="evidence" value="ECO:0007669"/>
    <property type="project" value="UniProtKB-UniRule"/>
</dbReference>
<dbReference type="GO" id="GO:0019242">
    <property type="term" value="P:methylglyoxal biosynthetic process"/>
    <property type="evidence" value="ECO:0007669"/>
    <property type="project" value="UniProtKB-UniRule"/>
</dbReference>
<dbReference type="CDD" id="cd01422">
    <property type="entry name" value="MGS"/>
    <property type="match status" value="1"/>
</dbReference>
<dbReference type="Gene3D" id="3.40.50.1380">
    <property type="entry name" value="Methylglyoxal synthase-like domain"/>
    <property type="match status" value="1"/>
</dbReference>
<dbReference type="HAMAP" id="MF_00549">
    <property type="entry name" value="Methylglyoxal_synth"/>
    <property type="match status" value="1"/>
</dbReference>
<dbReference type="InterPro" id="IPR004363">
    <property type="entry name" value="Methylgl_synth"/>
</dbReference>
<dbReference type="InterPro" id="IPR018148">
    <property type="entry name" value="Methylglyoxal_synth_AS"/>
</dbReference>
<dbReference type="InterPro" id="IPR011607">
    <property type="entry name" value="MGS-like_dom"/>
</dbReference>
<dbReference type="InterPro" id="IPR036914">
    <property type="entry name" value="MGS-like_dom_sf"/>
</dbReference>
<dbReference type="NCBIfam" id="TIGR00160">
    <property type="entry name" value="MGSA"/>
    <property type="match status" value="1"/>
</dbReference>
<dbReference type="NCBIfam" id="NF003559">
    <property type="entry name" value="PRK05234.1"/>
    <property type="match status" value="1"/>
</dbReference>
<dbReference type="PANTHER" id="PTHR30492">
    <property type="entry name" value="METHYLGLYOXAL SYNTHASE"/>
    <property type="match status" value="1"/>
</dbReference>
<dbReference type="PANTHER" id="PTHR30492:SF0">
    <property type="entry name" value="METHYLGLYOXAL SYNTHASE"/>
    <property type="match status" value="1"/>
</dbReference>
<dbReference type="Pfam" id="PF02142">
    <property type="entry name" value="MGS"/>
    <property type="match status" value="1"/>
</dbReference>
<dbReference type="PIRSF" id="PIRSF006614">
    <property type="entry name" value="Methylglyox_syn"/>
    <property type="match status" value="1"/>
</dbReference>
<dbReference type="SMART" id="SM00851">
    <property type="entry name" value="MGS"/>
    <property type="match status" value="1"/>
</dbReference>
<dbReference type="SUPFAM" id="SSF52335">
    <property type="entry name" value="Methylglyoxal synthase-like"/>
    <property type="match status" value="1"/>
</dbReference>
<dbReference type="PROSITE" id="PS01335">
    <property type="entry name" value="METHYLGLYOXAL_SYNTH"/>
    <property type="match status" value="1"/>
</dbReference>
<dbReference type="PROSITE" id="PS51855">
    <property type="entry name" value="MGS"/>
    <property type="match status" value="1"/>
</dbReference>
<evidence type="ECO:0000255" key="1">
    <source>
        <dbReference type="HAMAP-Rule" id="MF_00549"/>
    </source>
</evidence>
<gene>
    <name evidence="1" type="primary">mgsA</name>
    <name type="ordered locus">Sde_1302</name>
</gene>
<protein>
    <recommendedName>
        <fullName evidence="1">Methylglyoxal synthase</fullName>
        <shortName evidence="1">MGS</shortName>
        <ecNumber evidence="1">4.2.3.3</ecNumber>
    </recommendedName>
</protein>